<sequence>MTTSSEDVLLQMGEVRYKKGDGTLYVMNERVAWMAEHRDTVTVSHRYADIKTQKISPEGKPKVQLQVVLHDGNTSTFHFVNRQGQAAMLADRDKVKELLQQLLPNFKRKVDKDLEDKNRILVENPNLLQLYKDLVITKVLTSDEFWATHAKDHALKKMGRSQEIGVSGAFLADIKPQTDGCNGLKYNLTSDVIHCIFKTYPAVKRKHFENVPAKMSEAEFWTKFFQSHYFHRDRLTAGTKDIFTECGKIDDQALKAAVQQGAGDPLLDLKKFEDVPLEEGFGSVAGDRNVVNSGNIVHQNMIKRFNQHSIMVLKTCANVTSAPSTMTNGTNNANGPVSQSAYTNGMNGKGQATATATKSSSDQVDKDEPQSKKQRLMEKIHYVDLGDPILEGDDSANGEKAKSKHFELSKVERYLNGPVQNSMYDNHNDPMSLEEVQYKLVRNSESWLNRNVQRTFICSKAAVNALGELSPGGSMMRGFQEQSAGQLVPNDFQRELRHLYLSLSELLKHFWSCFPPTSEELETKLQRMHETLQRFKMAKLVPFENRAMHELSPLRSSLTQHLNQLLRTANSKFATWKERKLRNTR</sequence>
<proteinExistence type="evidence at transcript level"/>
<organism>
    <name type="scientific">Drosophila melanogaster</name>
    <name type="common">Fruit fly</name>
    <dbReference type="NCBI Taxonomy" id="7227"/>
    <lineage>
        <taxon>Eukaryota</taxon>
        <taxon>Metazoa</taxon>
        <taxon>Ecdysozoa</taxon>
        <taxon>Arthropoda</taxon>
        <taxon>Hexapoda</taxon>
        <taxon>Insecta</taxon>
        <taxon>Pterygota</taxon>
        <taxon>Neoptera</taxon>
        <taxon>Endopterygota</taxon>
        <taxon>Diptera</taxon>
        <taxon>Brachycera</taxon>
        <taxon>Muscomorpha</taxon>
        <taxon>Ephydroidea</taxon>
        <taxon>Drosophilidae</taxon>
        <taxon>Drosophila</taxon>
        <taxon>Sophophora</taxon>
    </lineage>
</organism>
<evidence type="ECO:0000250" key="1"/>
<evidence type="ECO:0000250" key="2">
    <source>
        <dbReference type="UniProtKB" id="P32780"/>
    </source>
</evidence>
<evidence type="ECO:0000255" key="3">
    <source>
        <dbReference type="PROSITE-ProRule" id="PRU00036"/>
    </source>
</evidence>
<evidence type="ECO:0000256" key="4">
    <source>
        <dbReference type="SAM" id="MobiDB-lite"/>
    </source>
</evidence>
<evidence type="ECO:0000305" key="5"/>
<dbReference type="EMBL" id="AE013599">
    <property type="protein sequence ID" value="AAF58253.2"/>
    <property type="molecule type" value="Genomic_DNA"/>
</dbReference>
<dbReference type="EMBL" id="AE013599">
    <property type="protein sequence ID" value="AAM71001.1"/>
    <property type="molecule type" value="Genomic_DNA"/>
</dbReference>
<dbReference type="EMBL" id="AY052097">
    <property type="protein sequence ID" value="AAK93521.1"/>
    <property type="molecule type" value="mRNA"/>
</dbReference>
<dbReference type="RefSeq" id="NP_001246321.1">
    <property type="nucleotide sequence ID" value="NM_001259392.2"/>
</dbReference>
<dbReference type="RefSeq" id="NP_610957.1">
    <property type="nucleotide sequence ID" value="NM_137113.4"/>
</dbReference>
<dbReference type="RefSeq" id="NP_725382.1">
    <property type="nucleotide sequence ID" value="NM_166048.1"/>
</dbReference>
<dbReference type="RefSeq" id="NP_725383.1">
    <property type="nucleotide sequence ID" value="NM_166049.1"/>
</dbReference>
<dbReference type="SMR" id="Q960E8"/>
<dbReference type="BioGRID" id="62348">
    <property type="interactions" value="9"/>
</dbReference>
<dbReference type="ComplexPortal" id="CPX-2258">
    <property type="entry name" value="General transcription factor TFIIH complex"/>
</dbReference>
<dbReference type="DIP" id="DIP-21835N"/>
<dbReference type="FunCoup" id="Q960E8">
    <property type="interactions" value="2613"/>
</dbReference>
<dbReference type="IntAct" id="Q960E8">
    <property type="interactions" value="5"/>
</dbReference>
<dbReference type="STRING" id="7227.FBpp0086678"/>
<dbReference type="PaxDb" id="7227-FBpp0086676"/>
<dbReference type="DNASU" id="36598"/>
<dbReference type="EnsemblMetazoa" id="FBtr0087548">
    <property type="protein sequence ID" value="FBpp0086676"/>
    <property type="gene ID" value="FBgn0033929"/>
</dbReference>
<dbReference type="EnsemblMetazoa" id="FBtr0087549">
    <property type="protein sequence ID" value="FBpp0086677"/>
    <property type="gene ID" value="FBgn0033929"/>
</dbReference>
<dbReference type="EnsemblMetazoa" id="FBtr0087550">
    <property type="protein sequence ID" value="FBpp0086678"/>
    <property type="gene ID" value="FBgn0033929"/>
</dbReference>
<dbReference type="EnsemblMetazoa" id="FBtr0305616">
    <property type="protein sequence ID" value="FBpp0294063"/>
    <property type="gene ID" value="FBgn0033929"/>
</dbReference>
<dbReference type="GeneID" id="36598"/>
<dbReference type="KEGG" id="dme:Dmel_CG8151"/>
<dbReference type="UCSC" id="CG8151-RA">
    <property type="organism name" value="d. melanogaster"/>
</dbReference>
<dbReference type="AGR" id="FB:FBgn0033929"/>
<dbReference type="CTD" id="36598"/>
<dbReference type="FlyBase" id="FBgn0033929">
    <property type="gene designation" value="Tfb1"/>
</dbReference>
<dbReference type="VEuPathDB" id="VectorBase:FBgn0033929"/>
<dbReference type="eggNOG" id="KOG2074">
    <property type="taxonomic scope" value="Eukaryota"/>
</dbReference>
<dbReference type="GeneTree" id="ENSGT00390000015066"/>
<dbReference type="HOGENOM" id="CLU_037467_0_0_1"/>
<dbReference type="InParanoid" id="Q960E8"/>
<dbReference type="OMA" id="VCTCELL"/>
<dbReference type="OrthoDB" id="360521at2759"/>
<dbReference type="PhylomeDB" id="Q960E8"/>
<dbReference type="Reactome" id="R-DME-112382">
    <property type="pathway name" value="Formation of RNA Pol II elongation complex"/>
</dbReference>
<dbReference type="Reactome" id="R-DME-113418">
    <property type="pathway name" value="Formation of the Early Elongation Complex"/>
</dbReference>
<dbReference type="Reactome" id="R-DME-5696395">
    <property type="pathway name" value="Formation of Incision Complex in GG-NER"/>
</dbReference>
<dbReference type="Reactome" id="R-DME-5696400">
    <property type="pathway name" value="Dual Incision in GG-NER"/>
</dbReference>
<dbReference type="Reactome" id="R-DME-674695">
    <property type="pathway name" value="RNA Polymerase II Pre-transcription Events"/>
</dbReference>
<dbReference type="Reactome" id="R-DME-6781823">
    <property type="pathway name" value="Formation of TC-NER Pre-Incision Complex"/>
</dbReference>
<dbReference type="Reactome" id="R-DME-6782135">
    <property type="pathway name" value="Dual incision in TC-NER"/>
</dbReference>
<dbReference type="Reactome" id="R-DME-6782210">
    <property type="pathway name" value="Gap-filling DNA repair synthesis and ligation in TC-NER"/>
</dbReference>
<dbReference type="Reactome" id="R-DME-6796648">
    <property type="pathway name" value="TP53 Regulates Transcription of DNA Repair Genes"/>
</dbReference>
<dbReference type="Reactome" id="R-DME-72086">
    <property type="pathway name" value="mRNA Capping"/>
</dbReference>
<dbReference type="Reactome" id="R-DME-73772">
    <property type="pathway name" value="RNA Polymerase I Promoter Escape"/>
</dbReference>
<dbReference type="Reactome" id="R-DME-73776">
    <property type="pathway name" value="RNA Polymerase II Promoter Escape"/>
</dbReference>
<dbReference type="Reactome" id="R-DME-73779">
    <property type="pathway name" value="RNA Polymerase II Transcription Pre-Initiation And Promoter Opening"/>
</dbReference>
<dbReference type="Reactome" id="R-DME-75953">
    <property type="pathway name" value="RNA Polymerase II Transcription Initiation"/>
</dbReference>
<dbReference type="Reactome" id="R-DME-75955">
    <property type="pathway name" value="RNA Polymerase II Transcription Elongation"/>
</dbReference>
<dbReference type="Reactome" id="R-DME-76042">
    <property type="pathway name" value="RNA Polymerase II Transcription Initiation And Promoter Clearance"/>
</dbReference>
<dbReference type="Reactome" id="R-DME-77075">
    <property type="pathway name" value="RNA Pol II CTD phosphorylation and interaction with CE"/>
</dbReference>
<dbReference type="SignaLink" id="Q960E8"/>
<dbReference type="BioGRID-ORCS" id="36598">
    <property type="hits" value="1 hit in 1 CRISPR screen"/>
</dbReference>
<dbReference type="ChiTaRS" id="Tfb1">
    <property type="organism name" value="fly"/>
</dbReference>
<dbReference type="GenomeRNAi" id="36598"/>
<dbReference type="PRO" id="PR:Q960E8"/>
<dbReference type="Proteomes" id="UP000000803">
    <property type="component" value="Chromosome 2R"/>
</dbReference>
<dbReference type="Bgee" id="FBgn0033929">
    <property type="expression patterns" value="Expressed in spermatocyte in testis and 107 other cell types or tissues"/>
</dbReference>
<dbReference type="ExpressionAtlas" id="Q960E8">
    <property type="expression patterns" value="baseline and differential"/>
</dbReference>
<dbReference type="GO" id="GO:0005634">
    <property type="term" value="C:nucleus"/>
    <property type="evidence" value="ECO:0000250"/>
    <property type="project" value="FlyBase"/>
</dbReference>
<dbReference type="GO" id="GO:0000439">
    <property type="term" value="C:transcription factor TFIIH core complex"/>
    <property type="evidence" value="ECO:0000250"/>
    <property type="project" value="FlyBase"/>
</dbReference>
<dbReference type="GO" id="GO:0005675">
    <property type="term" value="C:transcription factor TFIIH holo complex"/>
    <property type="evidence" value="ECO:0000314"/>
    <property type="project" value="FlyBase"/>
</dbReference>
<dbReference type="GO" id="GO:0006281">
    <property type="term" value="P:DNA repair"/>
    <property type="evidence" value="ECO:0000318"/>
    <property type="project" value="GO_Central"/>
</dbReference>
<dbReference type="GO" id="GO:0006289">
    <property type="term" value="P:nucleotide-excision repair"/>
    <property type="evidence" value="ECO:0000250"/>
    <property type="project" value="FlyBase"/>
</dbReference>
<dbReference type="GO" id="GO:0009411">
    <property type="term" value="P:response to UV"/>
    <property type="evidence" value="ECO:0000315"/>
    <property type="project" value="FlyBase"/>
</dbReference>
<dbReference type="GO" id="GO:0001111">
    <property type="term" value="P:RNA polymerase II promoter clearance"/>
    <property type="evidence" value="ECO:0000250"/>
    <property type="project" value="FlyBase"/>
</dbReference>
<dbReference type="GO" id="GO:0006360">
    <property type="term" value="P:transcription by RNA polymerase I"/>
    <property type="evidence" value="ECO:0000318"/>
    <property type="project" value="GO_Central"/>
</dbReference>
<dbReference type="GO" id="GO:0006366">
    <property type="term" value="P:transcription by RNA polymerase II"/>
    <property type="evidence" value="ECO:0000318"/>
    <property type="project" value="GO_Central"/>
</dbReference>
<dbReference type="GO" id="GO:0006367">
    <property type="term" value="P:transcription initiation at RNA polymerase II promoter"/>
    <property type="evidence" value="ECO:0000250"/>
    <property type="project" value="FlyBase"/>
</dbReference>
<dbReference type="GO" id="GO:0001113">
    <property type="term" value="P:transcription open complex formation at RNA polymerase II promoter"/>
    <property type="evidence" value="ECO:0000250"/>
    <property type="project" value="FlyBase"/>
</dbReference>
<dbReference type="CDD" id="cd13229">
    <property type="entry name" value="PH_TFIIH"/>
    <property type="match status" value="1"/>
</dbReference>
<dbReference type="FunFam" id="2.30.29.30:FF:000115">
    <property type="entry name" value="General transcription factor IIH subunit 1"/>
    <property type="match status" value="1"/>
</dbReference>
<dbReference type="Gene3D" id="6.10.140.1200">
    <property type="match status" value="1"/>
</dbReference>
<dbReference type="Gene3D" id="1.10.3970.10">
    <property type="entry name" value="BSD domain"/>
    <property type="match status" value="1"/>
</dbReference>
<dbReference type="Gene3D" id="2.30.29.30">
    <property type="entry name" value="Pleckstrin-homology domain (PH domain)/Phosphotyrosine-binding domain (PTB)"/>
    <property type="match status" value="1"/>
</dbReference>
<dbReference type="InterPro" id="IPR005607">
    <property type="entry name" value="BSD_dom"/>
</dbReference>
<dbReference type="InterPro" id="IPR035925">
    <property type="entry name" value="BSD_dom_sf"/>
</dbReference>
<dbReference type="InterPro" id="IPR011993">
    <property type="entry name" value="PH-like_dom_sf"/>
</dbReference>
<dbReference type="InterPro" id="IPR027079">
    <property type="entry name" value="Tfb1/GTF2H1"/>
</dbReference>
<dbReference type="InterPro" id="IPR013876">
    <property type="entry name" value="TFIIH_BTF_p62_N"/>
</dbReference>
<dbReference type="PANTHER" id="PTHR12856">
    <property type="entry name" value="TRANSCRIPTION INITIATION FACTOR IIH-RELATED"/>
    <property type="match status" value="1"/>
</dbReference>
<dbReference type="Pfam" id="PF03909">
    <property type="entry name" value="BSD"/>
    <property type="match status" value="1"/>
</dbReference>
<dbReference type="Pfam" id="PF08567">
    <property type="entry name" value="PH_TFIIH"/>
    <property type="match status" value="1"/>
</dbReference>
<dbReference type="SMART" id="SM00751">
    <property type="entry name" value="BSD"/>
    <property type="match status" value="2"/>
</dbReference>
<dbReference type="SUPFAM" id="SSF140383">
    <property type="entry name" value="BSD domain-like"/>
    <property type="match status" value="2"/>
</dbReference>
<dbReference type="SUPFAM" id="SSF50729">
    <property type="entry name" value="PH domain-like"/>
    <property type="match status" value="1"/>
</dbReference>
<dbReference type="PROSITE" id="PS50858">
    <property type="entry name" value="BSD"/>
    <property type="match status" value="2"/>
</dbReference>
<name>TF2H1_DROME</name>
<gene>
    <name type="primary">Tfb1</name>
    <name type="ORF">CG8151</name>
</gene>
<keyword id="KW-0227">DNA damage</keyword>
<keyword id="KW-0234">DNA repair</keyword>
<keyword id="KW-0539">Nucleus</keyword>
<keyword id="KW-1185">Reference proteome</keyword>
<keyword id="KW-0677">Repeat</keyword>
<keyword id="KW-0804">Transcription</keyword>
<keyword id="KW-0805">Transcription regulation</keyword>
<reference key="1">
    <citation type="journal article" date="2000" name="Science">
        <title>The genome sequence of Drosophila melanogaster.</title>
        <authorList>
            <person name="Adams M.D."/>
            <person name="Celniker S.E."/>
            <person name="Holt R.A."/>
            <person name="Evans C.A."/>
            <person name="Gocayne J.D."/>
            <person name="Amanatides P.G."/>
            <person name="Scherer S.E."/>
            <person name="Li P.W."/>
            <person name="Hoskins R.A."/>
            <person name="Galle R.F."/>
            <person name="George R.A."/>
            <person name="Lewis S.E."/>
            <person name="Richards S."/>
            <person name="Ashburner M."/>
            <person name="Henderson S.N."/>
            <person name="Sutton G.G."/>
            <person name="Wortman J.R."/>
            <person name="Yandell M.D."/>
            <person name="Zhang Q."/>
            <person name="Chen L.X."/>
            <person name="Brandon R.C."/>
            <person name="Rogers Y.-H.C."/>
            <person name="Blazej R.G."/>
            <person name="Champe M."/>
            <person name="Pfeiffer B.D."/>
            <person name="Wan K.H."/>
            <person name="Doyle C."/>
            <person name="Baxter E.G."/>
            <person name="Helt G."/>
            <person name="Nelson C.R."/>
            <person name="Miklos G.L.G."/>
            <person name="Abril J.F."/>
            <person name="Agbayani A."/>
            <person name="An H.-J."/>
            <person name="Andrews-Pfannkoch C."/>
            <person name="Baldwin D."/>
            <person name="Ballew R.M."/>
            <person name="Basu A."/>
            <person name="Baxendale J."/>
            <person name="Bayraktaroglu L."/>
            <person name="Beasley E.M."/>
            <person name="Beeson K.Y."/>
            <person name="Benos P.V."/>
            <person name="Berman B.P."/>
            <person name="Bhandari D."/>
            <person name="Bolshakov S."/>
            <person name="Borkova D."/>
            <person name="Botchan M.R."/>
            <person name="Bouck J."/>
            <person name="Brokstein P."/>
            <person name="Brottier P."/>
            <person name="Burtis K.C."/>
            <person name="Busam D.A."/>
            <person name="Butler H."/>
            <person name="Cadieu E."/>
            <person name="Center A."/>
            <person name="Chandra I."/>
            <person name="Cherry J.M."/>
            <person name="Cawley S."/>
            <person name="Dahlke C."/>
            <person name="Davenport L.B."/>
            <person name="Davies P."/>
            <person name="de Pablos B."/>
            <person name="Delcher A."/>
            <person name="Deng Z."/>
            <person name="Mays A.D."/>
            <person name="Dew I."/>
            <person name="Dietz S.M."/>
            <person name="Dodson K."/>
            <person name="Doup L.E."/>
            <person name="Downes M."/>
            <person name="Dugan-Rocha S."/>
            <person name="Dunkov B.C."/>
            <person name="Dunn P."/>
            <person name="Durbin K.J."/>
            <person name="Evangelista C.C."/>
            <person name="Ferraz C."/>
            <person name="Ferriera S."/>
            <person name="Fleischmann W."/>
            <person name="Fosler C."/>
            <person name="Gabrielian A.E."/>
            <person name="Garg N.S."/>
            <person name="Gelbart W.M."/>
            <person name="Glasser K."/>
            <person name="Glodek A."/>
            <person name="Gong F."/>
            <person name="Gorrell J.H."/>
            <person name="Gu Z."/>
            <person name="Guan P."/>
            <person name="Harris M."/>
            <person name="Harris N.L."/>
            <person name="Harvey D.A."/>
            <person name="Heiman T.J."/>
            <person name="Hernandez J.R."/>
            <person name="Houck J."/>
            <person name="Hostin D."/>
            <person name="Houston K.A."/>
            <person name="Howland T.J."/>
            <person name="Wei M.-H."/>
            <person name="Ibegwam C."/>
            <person name="Jalali M."/>
            <person name="Kalush F."/>
            <person name="Karpen G.H."/>
            <person name="Ke Z."/>
            <person name="Kennison J.A."/>
            <person name="Ketchum K.A."/>
            <person name="Kimmel B.E."/>
            <person name="Kodira C.D."/>
            <person name="Kraft C.L."/>
            <person name="Kravitz S."/>
            <person name="Kulp D."/>
            <person name="Lai Z."/>
            <person name="Lasko P."/>
            <person name="Lei Y."/>
            <person name="Levitsky A.A."/>
            <person name="Li J.H."/>
            <person name="Li Z."/>
            <person name="Liang Y."/>
            <person name="Lin X."/>
            <person name="Liu X."/>
            <person name="Mattei B."/>
            <person name="McIntosh T.C."/>
            <person name="McLeod M.P."/>
            <person name="McPherson D."/>
            <person name="Merkulov G."/>
            <person name="Milshina N.V."/>
            <person name="Mobarry C."/>
            <person name="Morris J."/>
            <person name="Moshrefi A."/>
            <person name="Mount S.M."/>
            <person name="Moy M."/>
            <person name="Murphy B."/>
            <person name="Murphy L."/>
            <person name="Muzny D.M."/>
            <person name="Nelson D.L."/>
            <person name="Nelson D.R."/>
            <person name="Nelson K.A."/>
            <person name="Nixon K."/>
            <person name="Nusskern D.R."/>
            <person name="Pacleb J.M."/>
            <person name="Palazzolo M."/>
            <person name="Pittman G.S."/>
            <person name="Pan S."/>
            <person name="Pollard J."/>
            <person name="Puri V."/>
            <person name="Reese M.G."/>
            <person name="Reinert K."/>
            <person name="Remington K."/>
            <person name="Saunders R.D.C."/>
            <person name="Scheeler F."/>
            <person name="Shen H."/>
            <person name="Shue B.C."/>
            <person name="Siden-Kiamos I."/>
            <person name="Simpson M."/>
            <person name="Skupski M.P."/>
            <person name="Smith T.J."/>
            <person name="Spier E."/>
            <person name="Spradling A.C."/>
            <person name="Stapleton M."/>
            <person name="Strong R."/>
            <person name="Sun E."/>
            <person name="Svirskas R."/>
            <person name="Tector C."/>
            <person name="Turner R."/>
            <person name="Venter E."/>
            <person name="Wang A.H."/>
            <person name="Wang X."/>
            <person name="Wang Z.-Y."/>
            <person name="Wassarman D.A."/>
            <person name="Weinstock G.M."/>
            <person name="Weissenbach J."/>
            <person name="Williams S.M."/>
            <person name="Woodage T."/>
            <person name="Worley K.C."/>
            <person name="Wu D."/>
            <person name="Yang S."/>
            <person name="Yao Q.A."/>
            <person name="Ye J."/>
            <person name="Yeh R.-F."/>
            <person name="Zaveri J.S."/>
            <person name="Zhan M."/>
            <person name="Zhang G."/>
            <person name="Zhao Q."/>
            <person name="Zheng L."/>
            <person name="Zheng X.H."/>
            <person name="Zhong F.N."/>
            <person name="Zhong W."/>
            <person name="Zhou X."/>
            <person name="Zhu S.C."/>
            <person name="Zhu X."/>
            <person name="Smith H.O."/>
            <person name="Gibbs R.A."/>
            <person name="Myers E.W."/>
            <person name="Rubin G.M."/>
            <person name="Venter J.C."/>
        </authorList>
    </citation>
    <scope>NUCLEOTIDE SEQUENCE [LARGE SCALE GENOMIC DNA]</scope>
    <source>
        <strain>Berkeley</strain>
    </source>
</reference>
<reference key="2">
    <citation type="journal article" date="2002" name="Genome Biol.">
        <title>Annotation of the Drosophila melanogaster euchromatic genome: a systematic review.</title>
        <authorList>
            <person name="Misra S."/>
            <person name="Crosby M.A."/>
            <person name="Mungall C.J."/>
            <person name="Matthews B.B."/>
            <person name="Campbell K.S."/>
            <person name="Hradecky P."/>
            <person name="Huang Y."/>
            <person name="Kaminker J.S."/>
            <person name="Millburn G.H."/>
            <person name="Prochnik S.E."/>
            <person name="Smith C.D."/>
            <person name="Tupy J.L."/>
            <person name="Whitfield E.J."/>
            <person name="Bayraktaroglu L."/>
            <person name="Berman B.P."/>
            <person name="Bettencourt B.R."/>
            <person name="Celniker S.E."/>
            <person name="de Grey A.D.N.J."/>
            <person name="Drysdale R.A."/>
            <person name="Harris N.L."/>
            <person name="Richter J."/>
            <person name="Russo S."/>
            <person name="Schroeder A.J."/>
            <person name="Shu S.Q."/>
            <person name="Stapleton M."/>
            <person name="Yamada C."/>
            <person name="Ashburner M."/>
            <person name="Gelbart W.M."/>
            <person name="Rubin G.M."/>
            <person name="Lewis S.E."/>
        </authorList>
    </citation>
    <scope>GENOME REANNOTATION</scope>
    <source>
        <strain>Berkeley</strain>
    </source>
</reference>
<reference key="3">
    <citation type="journal article" date="2002" name="Genome Biol.">
        <title>A Drosophila full-length cDNA resource.</title>
        <authorList>
            <person name="Stapleton M."/>
            <person name="Carlson J.W."/>
            <person name="Brokstein P."/>
            <person name="Yu C."/>
            <person name="Champe M."/>
            <person name="George R.A."/>
            <person name="Guarin H."/>
            <person name="Kronmiller B."/>
            <person name="Pacleb J.M."/>
            <person name="Park S."/>
            <person name="Wan K.H."/>
            <person name="Rubin G.M."/>
            <person name="Celniker S.E."/>
        </authorList>
    </citation>
    <scope>NUCLEOTIDE SEQUENCE [LARGE SCALE MRNA]</scope>
    <source>
        <strain>Berkeley</strain>
        <tissue>Embryo</tissue>
    </source>
</reference>
<feature type="chain" id="PRO_0000119247" description="General transcription factor IIH subunit 1">
    <location>
        <begin position="1"/>
        <end position="585"/>
    </location>
</feature>
<feature type="domain" description="BSD 1" evidence="3">
    <location>
        <begin position="104"/>
        <end position="159"/>
    </location>
</feature>
<feature type="domain" description="BSD 2" evidence="3">
    <location>
        <begin position="180"/>
        <end position="232"/>
    </location>
</feature>
<feature type="region of interest" description="Disordered" evidence="4">
    <location>
        <begin position="324"/>
        <end position="374"/>
    </location>
</feature>
<feature type="compositionally biased region" description="Polar residues" evidence="4">
    <location>
        <begin position="324"/>
        <end position="362"/>
    </location>
</feature>
<feature type="compositionally biased region" description="Basic and acidic residues" evidence="4">
    <location>
        <begin position="363"/>
        <end position="374"/>
    </location>
</feature>
<comment type="function">
    <text evidence="2">Component of the general transcription and DNA repair factor IIH (TFIIH) core complex, which is involved in general and transcription-coupled nucleotide excision repair (NER) of damaged DNA and, when complexed to CAK, in RNA transcription by RNA polymerase II. In NER, TFIIH acts by opening DNA around the lesion to allow the excision of the damaged oligonucleotide and its replacement by a new DNA fragment. In transcription, TFIIH has an essential role in transcription initiation. When the pre-initiation complex (PIC) has been established, TFIIH is required for promoter opening and promoter escape. Phosphorylation of the C-terminal tail (CTD) of the largest subunit of RNA polymerase II by the kinase module CAK controls the initiation of transcription.</text>
</comment>
<comment type="subunit">
    <text evidence="2">Component of the 7-subunit TFIIH core complex composed of XPB/ERCC3, XPD/ERCC2, GTF2H1, GTF2H2, GTF2H3, GTF2H4 and GTF2H5, which is active in NER. The core complex associates with the 3-subunit CDK-activating kinase (CAK) module composed of CCNH/cyclin H, CDK7 and MNAT1 to form the 10-subunit holoenzyme (holo-TFIIH) active in transcription.</text>
</comment>
<comment type="subcellular location">
    <subcellularLocation>
        <location evidence="1">Nucleus</location>
    </subcellularLocation>
</comment>
<comment type="similarity">
    <text evidence="5">Belongs to the TFB1 family.</text>
</comment>
<protein>
    <recommendedName>
        <fullName>General transcription factor IIH subunit 1</fullName>
    </recommendedName>
    <alternativeName>
        <fullName>TFIIH basal transcription factor complex subunit 1</fullName>
    </alternativeName>
</protein>
<accession>Q960E8</accession>
<accession>A4UZH0</accession>
<accession>Q0E978</accession>